<organism>
    <name type="scientific">Ureaplasma parvum serovar 3 (strain ATCC 700970)</name>
    <dbReference type="NCBI Taxonomy" id="273119"/>
    <lineage>
        <taxon>Bacteria</taxon>
        <taxon>Bacillati</taxon>
        <taxon>Mycoplasmatota</taxon>
        <taxon>Mycoplasmoidales</taxon>
        <taxon>Mycoplasmoidaceae</taxon>
        <taxon>Ureaplasma</taxon>
    </lineage>
</organism>
<accession>Q9PPR3</accession>
<protein>
    <recommendedName>
        <fullName evidence="1">Small ribosomal subunit protein uS9</fullName>
    </recommendedName>
    <alternativeName>
        <fullName evidence="2">30S ribosomal protein S9</fullName>
    </alternativeName>
</protein>
<gene>
    <name evidence="1" type="primary">rpsI</name>
    <name evidence="1" type="synonym">rps9</name>
    <name type="ordered locus">UU576</name>
</gene>
<feature type="chain" id="PRO_0000111436" description="Small ribosomal subunit protein uS9">
    <location>
        <begin position="1"/>
        <end position="133"/>
    </location>
</feature>
<keyword id="KW-1185">Reference proteome</keyword>
<keyword id="KW-0687">Ribonucleoprotein</keyword>
<keyword id="KW-0689">Ribosomal protein</keyword>
<evidence type="ECO:0000255" key="1">
    <source>
        <dbReference type="HAMAP-Rule" id="MF_00532"/>
    </source>
</evidence>
<evidence type="ECO:0000305" key="2"/>
<dbReference type="EMBL" id="AF222894">
    <property type="protein sequence ID" value="AAF30990.1"/>
    <property type="molecule type" value="Genomic_DNA"/>
</dbReference>
<dbReference type="RefSeq" id="WP_006688496.1">
    <property type="nucleotide sequence ID" value="NC_002162.1"/>
</dbReference>
<dbReference type="SMR" id="Q9PPR3"/>
<dbReference type="STRING" id="273119.UU576"/>
<dbReference type="EnsemblBacteria" id="AAF30990">
    <property type="protein sequence ID" value="AAF30990"/>
    <property type="gene ID" value="UU576"/>
</dbReference>
<dbReference type="GeneID" id="29672154"/>
<dbReference type="KEGG" id="uur:UU576"/>
<dbReference type="eggNOG" id="COG0103">
    <property type="taxonomic scope" value="Bacteria"/>
</dbReference>
<dbReference type="HOGENOM" id="CLU_046483_2_1_14"/>
<dbReference type="OrthoDB" id="9803965at2"/>
<dbReference type="Proteomes" id="UP000000423">
    <property type="component" value="Chromosome"/>
</dbReference>
<dbReference type="GO" id="GO:0022627">
    <property type="term" value="C:cytosolic small ribosomal subunit"/>
    <property type="evidence" value="ECO:0007669"/>
    <property type="project" value="TreeGrafter"/>
</dbReference>
<dbReference type="GO" id="GO:0003723">
    <property type="term" value="F:RNA binding"/>
    <property type="evidence" value="ECO:0007669"/>
    <property type="project" value="TreeGrafter"/>
</dbReference>
<dbReference type="GO" id="GO:0003735">
    <property type="term" value="F:structural constituent of ribosome"/>
    <property type="evidence" value="ECO:0007669"/>
    <property type="project" value="InterPro"/>
</dbReference>
<dbReference type="GO" id="GO:0006412">
    <property type="term" value="P:translation"/>
    <property type="evidence" value="ECO:0007669"/>
    <property type="project" value="UniProtKB-UniRule"/>
</dbReference>
<dbReference type="FunFam" id="3.30.230.10:FF:000001">
    <property type="entry name" value="30S ribosomal protein S9"/>
    <property type="match status" value="1"/>
</dbReference>
<dbReference type="Gene3D" id="3.30.230.10">
    <property type="match status" value="1"/>
</dbReference>
<dbReference type="HAMAP" id="MF_00532_B">
    <property type="entry name" value="Ribosomal_uS9_B"/>
    <property type="match status" value="1"/>
</dbReference>
<dbReference type="InterPro" id="IPR020568">
    <property type="entry name" value="Ribosomal_Su5_D2-typ_SF"/>
</dbReference>
<dbReference type="InterPro" id="IPR000754">
    <property type="entry name" value="Ribosomal_uS9"/>
</dbReference>
<dbReference type="InterPro" id="IPR023035">
    <property type="entry name" value="Ribosomal_uS9_bac/plastid"/>
</dbReference>
<dbReference type="InterPro" id="IPR020574">
    <property type="entry name" value="Ribosomal_uS9_CS"/>
</dbReference>
<dbReference type="InterPro" id="IPR014721">
    <property type="entry name" value="Ribsml_uS5_D2-typ_fold_subgr"/>
</dbReference>
<dbReference type="NCBIfam" id="NF001099">
    <property type="entry name" value="PRK00132.1"/>
    <property type="match status" value="1"/>
</dbReference>
<dbReference type="PANTHER" id="PTHR21569">
    <property type="entry name" value="RIBOSOMAL PROTEIN S9"/>
    <property type="match status" value="1"/>
</dbReference>
<dbReference type="PANTHER" id="PTHR21569:SF1">
    <property type="entry name" value="SMALL RIBOSOMAL SUBUNIT PROTEIN US9M"/>
    <property type="match status" value="1"/>
</dbReference>
<dbReference type="Pfam" id="PF00380">
    <property type="entry name" value="Ribosomal_S9"/>
    <property type="match status" value="1"/>
</dbReference>
<dbReference type="SUPFAM" id="SSF54211">
    <property type="entry name" value="Ribosomal protein S5 domain 2-like"/>
    <property type="match status" value="1"/>
</dbReference>
<dbReference type="PROSITE" id="PS00360">
    <property type="entry name" value="RIBOSOMAL_S9"/>
    <property type="match status" value="1"/>
</dbReference>
<reference key="1">
    <citation type="journal article" date="2000" name="Nature">
        <title>The complete sequence of the mucosal pathogen Ureaplasma urealyticum.</title>
        <authorList>
            <person name="Glass J.I."/>
            <person name="Lefkowitz E.J."/>
            <person name="Glass J.S."/>
            <person name="Heiner C.R."/>
            <person name="Chen E.Y."/>
            <person name="Cassell G.H."/>
        </authorList>
    </citation>
    <scope>NUCLEOTIDE SEQUENCE [LARGE SCALE GENOMIC DNA]</scope>
    <source>
        <strain>ATCC 700970</strain>
    </source>
</reference>
<sequence>MQKSNIVEYKGLGRRKSSIARVKLVPGSGKVLVNDRQPENYFPNKLVIQDMMQPLVLTKTAETYDVYVKVIGGGFNGQAGAIRLGITRALIQTREDLKTDLRKAGLVTRDSRVKERKKFGLYGARRAPQFTKR</sequence>
<comment type="similarity">
    <text evidence="1">Belongs to the universal ribosomal protein uS9 family.</text>
</comment>
<proteinExistence type="inferred from homology"/>
<name>RS9_UREPA</name>